<comment type="function">
    <text evidence="1">Catalyzes the 2-thiolation of uridine at the wobble position (U34) of tRNA, leading to the formation of s(2)U34.</text>
</comment>
<comment type="catalytic activity">
    <reaction evidence="1">
        <text>S-sulfanyl-L-cysteinyl-[protein] + uridine(34) in tRNA + AH2 + ATP = 2-thiouridine(34) in tRNA + L-cysteinyl-[protein] + A + AMP + diphosphate + H(+)</text>
        <dbReference type="Rhea" id="RHEA:47032"/>
        <dbReference type="Rhea" id="RHEA-COMP:10131"/>
        <dbReference type="Rhea" id="RHEA-COMP:11726"/>
        <dbReference type="Rhea" id="RHEA-COMP:11727"/>
        <dbReference type="Rhea" id="RHEA-COMP:11728"/>
        <dbReference type="ChEBI" id="CHEBI:13193"/>
        <dbReference type="ChEBI" id="CHEBI:15378"/>
        <dbReference type="ChEBI" id="CHEBI:17499"/>
        <dbReference type="ChEBI" id="CHEBI:29950"/>
        <dbReference type="ChEBI" id="CHEBI:30616"/>
        <dbReference type="ChEBI" id="CHEBI:33019"/>
        <dbReference type="ChEBI" id="CHEBI:61963"/>
        <dbReference type="ChEBI" id="CHEBI:65315"/>
        <dbReference type="ChEBI" id="CHEBI:87170"/>
        <dbReference type="ChEBI" id="CHEBI:456215"/>
        <dbReference type="EC" id="2.8.1.13"/>
    </reaction>
</comment>
<comment type="subcellular location">
    <subcellularLocation>
        <location evidence="1">Cytoplasm</location>
    </subcellularLocation>
</comment>
<comment type="similarity">
    <text evidence="1">Belongs to the MnmA/TRMU family.</text>
</comment>
<dbReference type="EC" id="2.8.1.13" evidence="1"/>
<dbReference type="EMBL" id="CP000094">
    <property type="protein sequence ID" value="ABA75334.1"/>
    <property type="molecule type" value="Genomic_DNA"/>
</dbReference>
<dbReference type="RefSeq" id="WP_011334952.1">
    <property type="nucleotide sequence ID" value="NC_007492.2"/>
</dbReference>
<dbReference type="SMR" id="Q3KA70"/>
<dbReference type="KEGG" id="pfo:Pfl01_3596"/>
<dbReference type="eggNOG" id="COG0482">
    <property type="taxonomic scope" value="Bacteria"/>
</dbReference>
<dbReference type="HOGENOM" id="CLU_035188_1_0_6"/>
<dbReference type="Proteomes" id="UP000002704">
    <property type="component" value="Chromosome"/>
</dbReference>
<dbReference type="GO" id="GO:0005737">
    <property type="term" value="C:cytoplasm"/>
    <property type="evidence" value="ECO:0007669"/>
    <property type="project" value="UniProtKB-SubCell"/>
</dbReference>
<dbReference type="GO" id="GO:0005524">
    <property type="term" value="F:ATP binding"/>
    <property type="evidence" value="ECO:0007669"/>
    <property type="project" value="UniProtKB-KW"/>
</dbReference>
<dbReference type="GO" id="GO:0000049">
    <property type="term" value="F:tRNA binding"/>
    <property type="evidence" value="ECO:0007669"/>
    <property type="project" value="UniProtKB-KW"/>
</dbReference>
<dbReference type="GO" id="GO:0103016">
    <property type="term" value="F:tRNA-uridine 2-sulfurtransferase activity"/>
    <property type="evidence" value="ECO:0007669"/>
    <property type="project" value="UniProtKB-EC"/>
</dbReference>
<dbReference type="GO" id="GO:0002143">
    <property type="term" value="P:tRNA wobble position uridine thiolation"/>
    <property type="evidence" value="ECO:0007669"/>
    <property type="project" value="TreeGrafter"/>
</dbReference>
<dbReference type="CDD" id="cd01998">
    <property type="entry name" value="MnmA_TRMU-like"/>
    <property type="match status" value="1"/>
</dbReference>
<dbReference type="FunFam" id="2.30.30.280:FF:000001">
    <property type="entry name" value="tRNA-specific 2-thiouridylase MnmA"/>
    <property type="match status" value="1"/>
</dbReference>
<dbReference type="FunFam" id="2.40.30.10:FF:000023">
    <property type="entry name" value="tRNA-specific 2-thiouridylase MnmA"/>
    <property type="match status" value="1"/>
</dbReference>
<dbReference type="FunFam" id="3.40.50.620:FF:000004">
    <property type="entry name" value="tRNA-specific 2-thiouridylase MnmA"/>
    <property type="match status" value="1"/>
</dbReference>
<dbReference type="Gene3D" id="2.30.30.280">
    <property type="entry name" value="Adenine nucleotide alpha hydrolases-like domains"/>
    <property type="match status" value="1"/>
</dbReference>
<dbReference type="Gene3D" id="3.40.50.620">
    <property type="entry name" value="HUPs"/>
    <property type="match status" value="1"/>
</dbReference>
<dbReference type="Gene3D" id="2.40.30.10">
    <property type="entry name" value="Translation factors"/>
    <property type="match status" value="1"/>
</dbReference>
<dbReference type="HAMAP" id="MF_00144">
    <property type="entry name" value="tRNA_thiouridyl_MnmA"/>
    <property type="match status" value="1"/>
</dbReference>
<dbReference type="InterPro" id="IPR004506">
    <property type="entry name" value="MnmA-like"/>
</dbReference>
<dbReference type="InterPro" id="IPR046885">
    <property type="entry name" value="MnmA-like_C"/>
</dbReference>
<dbReference type="InterPro" id="IPR046884">
    <property type="entry name" value="MnmA-like_central"/>
</dbReference>
<dbReference type="InterPro" id="IPR023382">
    <property type="entry name" value="MnmA-like_central_sf"/>
</dbReference>
<dbReference type="InterPro" id="IPR014729">
    <property type="entry name" value="Rossmann-like_a/b/a_fold"/>
</dbReference>
<dbReference type="NCBIfam" id="NF001138">
    <property type="entry name" value="PRK00143.1"/>
    <property type="match status" value="1"/>
</dbReference>
<dbReference type="NCBIfam" id="TIGR00420">
    <property type="entry name" value="trmU"/>
    <property type="match status" value="1"/>
</dbReference>
<dbReference type="PANTHER" id="PTHR11933:SF5">
    <property type="entry name" value="MITOCHONDRIAL TRNA-SPECIFIC 2-THIOURIDYLASE 1"/>
    <property type="match status" value="1"/>
</dbReference>
<dbReference type="PANTHER" id="PTHR11933">
    <property type="entry name" value="TRNA 5-METHYLAMINOMETHYL-2-THIOURIDYLATE -METHYLTRANSFERASE"/>
    <property type="match status" value="1"/>
</dbReference>
<dbReference type="Pfam" id="PF03054">
    <property type="entry name" value="tRNA_Me_trans"/>
    <property type="match status" value="1"/>
</dbReference>
<dbReference type="Pfam" id="PF20258">
    <property type="entry name" value="tRNA_Me_trans_C"/>
    <property type="match status" value="1"/>
</dbReference>
<dbReference type="Pfam" id="PF20259">
    <property type="entry name" value="tRNA_Me_trans_M"/>
    <property type="match status" value="1"/>
</dbReference>
<dbReference type="SUPFAM" id="SSF52402">
    <property type="entry name" value="Adenine nucleotide alpha hydrolases-like"/>
    <property type="match status" value="1"/>
</dbReference>
<accession>Q3KA70</accession>
<name>MNMA_PSEPF</name>
<proteinExistence type="inferred from homology"/>
<evidence type="ECO:0000255" key="1">
    <source>
        <dbReference type="HAMAP-Rule" id="MF_00144"/>
    </source>
</evidence>
<sequence length="374" mass="41625">MRDPAPSDTSKKRVIVGMSGGVDSSVSALLLIEQGYEVEGLFMKNWEEDDGTEYCTAMDDLADAQAVCDKIGIKLHTANFAAEYWDNVFEHFLAEYKAGRTPNPDILCNREIKFKAFLDYAMMLGADLIATGHYVRRRDIDGRTELLKGLDPNKDQSYFLHAVGGEQIAKTLFPVGELEKPEVRAIAEKYELATAKKKDSTGICFIGERRFSDFLKQYLPAQPGEIKTTEGEVIGRHHGLMYHTIGQRQGLGIGGLKDAGDEPWYVLRKDLDTNELIVGQGNNHPWLFSSALLASEIYWVNPIDLSQPLRLTAKVRYRQSDQACTLEKTDTGYRAVFDEPQRAVTPGQSVVFYDGEICLGGGVIEVAEPWSGQA</sequence>
<protein>
    <recommendedName>
        <fullName evidence="1">tRNA-specific 2-thiouridylase MnmA</fullName>
        <ecNumber evidence="1">2.8.1.13</ecNumber>
    </recommendedName>
</protein>
<organism>
    <name type="scientific">Pseudomonas fluorescens (strain Pf0-1)</name>
    <dbReference type="NCBI Taxonomy" id="205922"/>
    <lineage>
        <taxon>Bacteria</taxon>
        <taxon>Pseudomonadati</taxon>
        <taxon>Pseudomonadota</taxon>
        <taxon>Gammaproteobacteria</taxon>
        <taxon>Pseudomonadales</taxon>
        <taxon>Pseudomonadaceae</taxon>
        <taxon>Pseudomonas</taxon>
    </lineage>
</organism>
<gene>
    <name evidence="1" type="primary">mnmA</name>
    <name type="synonym">trmU</name>
    <name type="ordered locus">Pfl01_3596</name>
</gene>
<keyword id="KW-0067">ATP-binding</keyword>
<keyword id="KW-0963">Cytoplasm</keyword>
<keyword id="KW-1015">Disulfide bond</keyword>
<keyword id="KW-0547">Nucleotide-binding</keyword>
<keyword id="KW-0694">RNA-binding</keyword>
<keyword id="KW-0808">Transferase</keyword>
<keyword id="KW-0819">tRNA processing</keyword>
<keyword id="KW-0820">tRNA-binding</keyword>
<feature type="chain" id="PRO_1000009557" description="tRNA-specific 2-thiouridylase MnmA">
    <location>
        <begin position="1"/>
        <end position="374"/>
    </location>
</feature>
<feature type="region of interest" description="Interaction with target base in tRNA" evidence="1">
    <location>
        <begin position="103"/>
        <end position="105"/>
    </location>
</feature>
<feature type="region of interest" description="Interaction with tRNA" evidence="1">
    <location>
        <begin position="154"/>
        <end position="156"/>
    </location>
</feature>
<feature type="region of interest" description="Interaction with tRNA" evidence="1">
    <location>
        <begin position="316"/>
        <end position="317"/>
    </location>
</feature>
<feature type="active site" description="Nucleophile" evidence="1">
    <location>
        <position position="108"/>
    </location>
</feature>
<feature type="active site" description="Cysteine persulfide intermediate" evidence="1">
    <location>
        <position position="204"/>
    </location>
</feature>
<feature type="binding site" evidence="1">
    <location>
        <begin position="17"/>
        <end position="24"/>
    </location>
    <ligand>
        <name>ATP</name>
        <dbReference type="ChEBI" id="CHEBI:30616"/>
    </ligand>
</feature>
<feature type="binding site" evidence="1">
    <location>
        <position position="43"/>
    </location>
    <ligand>
        <name>ATP</name>
        <dbReference type="ChEBI" id="CHEBI:30616"/>
    </ligand>
</feature>
<feature type="binding site" evidence="1">
    <location>
        <position position="132"/>
    </location>
    <ligand>
        <name>ATP</name>
        <dbReference type="ChEBI" id="CHEBI:30616"/>
    </ligand>
</feature>
<feature type="site" description="Interaction with tRNA" evidence="1">
    <location>
        <position position="133"/>
    </location>
</feature>
<feature type="site" description="Interaction with tRNA" evidence="1">
    <location>
        <position position="348"/>
    </location>
</feature>
<feature type="disulfide bond" description="Alternate" evidence="1">
    <location>
        <begin position="108"/>
        <end position="204"/>
    </location>
</feature>
<reference key="1">
    <citation type="journal article" date="2009" name="Genome Biol.">
        <title>Genomic and genetic analyses of diversity and plant interactions of Pseudomonas fluorescens.</title>
        <authorList>
            <person name="Silby M.W."/>
            <person name="Cerdeno-Tarraga A.M."/>
            <person name="Vernikos G.S."/>
            <person name="Giddens S.R."/>
            <person name="Jackson R.W."/>
            <person name="Preston G.M."/>
            <person name="Zhang X.-X."/>
            <person name="Moon C.D."/>
            <person name="Gehrig S.M."/>
            <person name="Godfrey S.A.C."/>
            <person name="Knight C.G."/>
            <person name="Malone J.G."/>
            <person name="Robinson Z."/>
            <person name="Spiers A.J."/>
            <person name="Harris S."/>
            <person name="Challis G.L."/>
            <person name="Yaxley A.M."/>
            <person name="Harris D."/>
            <person name="Seeger K."/>
            <person name="Murphy L."/>
            <person name="Rutter S."/>
            <person name="Squares R."/>
            <person name="Quail M.A."/>
            <person name="Saunders E."/>
            <person name="Mavromatis K."/>
            <person name="Brettin T.S."/>
            <person name="Bentley S.D."/>
            <person name="Hothersall J."/>
            <person name="Stephens E."/>
            <person name="Thomas C.M."/>
            <person name="Parkhill J."/>
            <person name="Levy S.B."/>
            <person name="Rainey P.B."/>
            <person name="Thomson N.R."/>
        </authorList>
    </citation>
    <scope>NUCLEOTIDE SEQUENCE [LARGE SCALE GENOMIC DNA]</scope>
    <source>
        <strain>Pf0-1</strain>
    </source>
</reference>